<keyword id="KW-0963">Cytoplasm</keyword>
<keyword id="KW-0488">Methylation</keyword>
<keyword id="KW-0648">Protein biosynthesis</keyword>
<evidence type="ECO:0000255" key="1">
    <source>
        <dbReference type="HAMAP-Rule" id="MF_00093"/>
    </source>
</evidence>
<organism>
    <name type="scientific">Buchnera aphidicola subsp. Schizaphis graminum (strain Sg)</name>
    <dbReference type="NCBI Taxonomy" id="198804"/>
    <lineage>
        <taxon>Bacteria</taxon>
        <taxon>Pseudomonadati</taxon>
        <taxon>Pseudomonadota</taxon>
        <taxon>Gammaproteobacteria</taxon>
        <taxon>Enterobacterales</taxon>
        <taxon>Erwiniaceae</taxon>
        <taxon>Buchnera</taxon>
    </lineage>
</organism>
<name>RF1_BUCAP</name>
<reference key="1">
    <citation type="journal article" date="2002" name="Science">
        <title>50 million years of genomic stasis in endosymbiotic bacteria.</title>
        <authorList>
            <person name="Tamas I."/>
            <person name="Klasson L."/>
            <person name="Canbaeck B."/>
            <person name="Naeslund A.K."/>
            <person name="Eriksson A.-S."/>
            <person name="Wernegreen J.J."/>
            <person name="Sandstroem J.P."/>
            <person name="Moran N.A."/>
            <person name="Andersson S.G.E."/>
        </authorList>
    </citation>
    <scope>NUCLEOTIDE SEQUENCE [LARGE SCALE GENOMIC DNA]</scope>
    <source>
        <strain>Sg</strain>
    </source>
</reference>
<gene>
    <name evidence="1" type="primary">prfA</name>
    <name type="ordered locus">BUsg_165</name>
</gene>
<sequence length="361" mass="41459">MNSSIFNKLKSLRNRYEEIEIMLSQKDTISNQEKFKNLSKEYLQISEIVKNFIKWEKLETDIKNINLLFNDVEMHDIAQEELFIVKKQKKKLEEKIKILLLPVDPNDQHSCFIEIRAATGGDESSIFAGELFRMYTRYAENYMWKTEIMSSSENERGGFKEIIAKVTGKGACGRLKFESGGHRVQRVPETESQGRIHTSTCTVAIMPVRPKTKKEEIKVSDLKIDTFRSSGAGGQHVNTTDSAIRITHIPSGNVVECQDERSQHKNKAKALSILSARVYADKLAKSQKENSSMRRILLGTGERSDRNRTYNFAQNRITDHRINLTIYKLNEVLQGKLDLLIDPIMQEYQADMLSSLSEFKL</sequence>
<protein>
    <recommendedName>
        <fullName evidence="1">Peptide chain release factor 1</fullName>
        <shortName evidence="1">RF-1</shortName>
    </recommendedName>
</protein>
<feature type="chain" id="PRO_0000177647" description="Peptide chain release factor 1">
    <location>
        <begin position="1"/>
        <end position="361"/>
    </location>
</feature>
<feature type="modified residue" description="N5-methylglutamine" evidence="1">
    <location>
        <position position="235"/>
    </location>
</feature>
<accession>Q8K9X0</accession>
<comment type="function">
    <text evidence="1">Peptide chain release factor 1 directs the termination of translation in response to the peptide chain termination codons UAG and UAA.</text>
</comment>
<comment type="subcellular location">
    <subcellularLocation>
        <location evidence="1">Cytoplasm</location>
    </subcellularLocation>
</comment>
<comment type="PTM">
    <text evidence="1">Methylated by PrmC. Methylation increases the termination efficiency of RF1.</text>
</comment>
<comment type="similarity">
    <text evidence="1">Belongs to the prokaryotic/mitochondrial release factor family.</text>
</comment>
<proteinExistence type="inferred from homology"/>
<dbReference type="EMBL" id="AE013218">
    <property type="protein sequence ID" value="AAM67732.1"/>
    <property type="molecule type" value="Genomic_DNA"/>
</dbReference>
<dbReference type="RefSeq" id="WP_011053699.1">
    <property type="nucleotide sequence ID" value="NC_004061.1"/>
</dbReference>
<dbReference type="SMR" id="Q8K9X0"/>
<dbReference type="STRING" id="198804.BUsg_165"/>
<dbReference type="GeneID" id="93003634"/>
<dbReference type="KEGG" id="bas:BUsg_165"/>
<dbReference type="eggNOG" id="COG0216">
    <property type="taxonomic scope" value="Bacteria"/>
</dbReference>
<dbReference type="HOGENOM" id="CLU_036856_0_1_6"/>
<dbReference type="Proteomes" id="UP000000416">
    <property type="component" value="Chromosome"/>
</dbReference>
<dbReference type="GO" id="GO:0005737">
    <property type="term" value="C:cytoplasm"/>
    <property type="evidence" value="ECO:0007669"/>
    <property type="project" value="UniProtKB-SubCell"/>
</dbReference>
<dbReference type="GO" id="GO:0016149">
    <property type="term" value="F:translation release factor activity, codon specific"/>
    <property type="evidence" value="ECO:0007669"/>
    <property type="project" value="UniProtKB-UniRule"/>
</dbReference>
<dbReference type="FunFam" id="3.30.160.20:FF:000004">
    <property type="entry name" value="Peptide chain release factor 1"/>
    <property type="match status" value="1"/>
</dbReference>
<dbReference type="FunFam" id="3.30.70.1660:FF:000002">
    <property type="entry name" value="Peptide chain release factor 1"/>
    <property type="match status" value="1"/>
</dbReference>
<dbReference type="FunFam" id="3.30.70.1660:FF:000004">
    <property type="entry name" value="Peptide chain release factor 1"/>
    <property type="match status" value="1"/>
</dbReference>
<dbReference type="Gene3D" id="3.30.160.20">
    <property type="match status" value="1"/>
</dbReference>
<dbReference type="Gene3D" id="3.30.70.1660">
    <property type="match status" value="2"/>
</dbReference>
<dbReference type="Gene3D" id="6.10.140.1950">
    <property type="match status" value="1"/>
</dbReference>
<dbReference type="HAMAP" id="MF_00093">
    <property type="entry name" value="Rel_fac_1"/>
    <property type="match status" value="1"/>
</dbReference>
<dbReference type="InterPro" id="IPR005139">
    <property type="entry name" value="PCRF"/>
</dbReference>
<dbReference type="InterPro" id="IPR000352">
    <property type="entry name" value="Pep_chain_release_fac_I"/>
</dbReference>
<dbReference type="InterPro" id="IPR045853">
    <property type="entry name" value="Pep_chain_release_fac_I_sf"/>
</dbReference>
<dbReference type="InterPro" id="IPR050057">
    <property type="entry name" value="Prokaryotic/Mito_RF"/>
</dbReference>
<dbReference type="InterPro" id="IPR004373">
    <property type="entry name" value="RF-1"/>
</dbReference>
<dbReference type="NCBIfam" id="TIGR00019">
    <property type="entry name" value="prfA"/>
    <property type="match status" value="1"/>
</dbReference>
<dbReference type="NCBIfam" id="NF001859">
    <property type="entry name" value="PRK00591.1"/>
    <property type="match status" value="1"/>
</dbReference>
<dbReference type="PANTHER" id="PTHR43804">
    <property type="entry name" value="LD18447P"/>
    <property type="match status" value="1"/>
</dbReference>
<dbReference type="PANTHER" id="PTHR43804:SF7">
    <property type="entry name" value="LD18447P"/>
    <property type="match status" value="1"/>
</dbReference>
<dbReference type="Pfam" id="PF03462">
    <property type="entry name" value="PCRF"/>
    <property type="match status" value="1"/>
</dbReference>
<dbReference type="Pfam" id="PF00472">
    <property type="entry name" value="RF-1"/>
    <property type="match status" value="1"/>
</dbReference>
<dbReference type="SMART" id="SM00937">
    <property type="entry name" value="PCRF"/>
    <property type="match status" value="1"/>
</dbReference>
<dbReference type="SUPFAM" id="SSF75620">
    <property type="entry name" value="Release factor"/>
    <property type="match status" value="1"/>
</dbReference>
<dbReference type="PROSITE" id="PS00745">
    <property type="entry name" value="RF_PROK_I"/>
    <property type="match status" value="1"/>
</dbReference>